<protein>
    <recommendedName>
        <fullName>Periplasmic nitrate reductase, electron transfer subunit</fullName>
    </recommendedName>
    <alternativeName>
        <fullName evidence="6 8">Diheme cytochrome c NapB</fullName>
    </alternativeName>
</protein>
<gene>
    <name evidence="8" type="primary">napB</name>
    <name type="ordered locus">SO_0845</name>
</gene>
<reference evidence="8" key="1">
    <citation type="journal article" date="2002" name="Nat. Biotechnol.">
        <title>Genome sequence of the dissimilatory metal ion-reducing bacterium Shewanella oneidensis.</title>
        <authorList>
            <person name="Heidelberg J.F."/>
            <person name="Paulsen I.T."/>
            <person name="Nelson K.E."/>
            <person name="Gaidos E.J."/>
            <person name="Nelson W.C."/>
            <person name="Read T.D."/>
            <person name="Eisen J.A."/>
            <person name="Seshadri R."/>
            <person name="Ward N.L."/>
            <person name="Methe B.A."/>
            <person name="Clayton R.A."/>
            <person name="Meyer T."/>
            <person name="Tsapin A."/>
            <person name="Scott J."/>
            <person name="Beanan M.J."/>
            <person name="Brinkac L.M."/>
            <person name="Daugherty S.C."/>
            <person name="DeBoy R.T."/>
            <person name="Dodson R.J."/>
            <person name="Durkin A.S."/>
            <person name="Haft D.H."/>
            <person name="Kolonay J.F."/>
            <person name="Madupu R."/>
            <person name="Peterson J.D."/>
            <person name="Umayam L.A."/>
            <person name="White O."/>
            <person name="Wolf A.M."/>
            <person name="Vamathevan J.J."/>
            <person name="Weidman J.F."/>
            <person name="Impraim M."/>
            <person name="Lee K."/>
            <person name="Berry K.J."/>
            <person name="Lee C."/>
            <person name="Mueller J."/>
            <person name="Khouri H.M."/>
            <person name="Gill J."/>
            <person name="Utterback T.R."/>
            <person name="McDonald L.A."/>
            <person name="Feldblyum T.V."/>
            <person name="Smith H.O."/>
            <person name="Venter J.C."/>
            <person name="Nealson K.H."/>
            <person name="Fraser C.M."/>
        </authorList>
    </citation>
    <scope>NUCLEOTIDE SEQUENCE [LARGE SCALE GENOMIC DNA]</scope>
    <source>
        <strain>ATCC 700550 / JCM 31522 / CIP 106686 / LMG 19005 / NCIMB 14063 / MR-1</strain>
    </source>
</reference>
<reference evidence="7" key="2">
    <citation type="journal article" date="2009" name="ISME J.">
        <title>Reduction of nitrate in Shewanella oneidensis depends on atypical NAP and NRF systems with NapB as a preferred electron transport protein from CymA to NapA.</title>
        <authorList>
            <person name="Gao H."/>
            <person name="Yang Z.K."/>
            <person name="Barua S."/>
            <person name="Reed S.B."/>
            <person name="Romine M.F."/>
            <person name="Nealson K.H."/>
            <person name="Fredrickson J.K."/>
            <person name="Tiedje J.M."/>
            <person name="Zhou J."/>
        </authorList>
    </citation>
    <scope>FUNCTION</scope>
    <scope>INDUCTION</scope>
    <scope>DISRUPTION PHENOTYPE</scope>
    <source>
        <strain evidence="5">ATCC 700550 / JCM 31522 / CIP 106686 / LMG 19005 / NCIMB 14063 / MR-1</strain>
    </source>
</reference>
<comment type="function">
    <text evidence="5">Electron transfer subunit of the periplasmic nitrate reductase complex NapAB. Receives electrons from the membrane-anchored tetraheme c-type CymA protein and transfers these to NapA subunit, thus allowing electron flow between membrane and periplasm. Not essential for nitrate reduction but confers advantage to the organism when grown on nitrate and thereby a fitness gain in utilizing nitrate.</text>
</comment>
<comment type="subunit">
    <text evidence="1">Component of the periplasmic nitrate reductase NapAB complex composed of NapA and NapB.</text>
</comment>
<comment type="subcellular location">
    <subcellularLocation>
        <location evidence="1">Periplasm</location>
    </subcellularLocation>
</comment>
<comment type="induction">
    <text evidence="5">By nitrate or fumarate under anaerobic conditions.</text>
</comment>
<comment type="PTM">
    <text evidence="1">Binds 2 heme C groups per subunit.</text>
</comment>
<comment type="disruption phenotype">
    <text evidence="5">Mutants exhibit 15% slower rate of nitrate reduction compared to mutants for other genes in the NAP operon. Mutants can grow on nitrate to maximum cell density earlier than wild-type. Nitrite is not detected in mutant strains but ammonium reaches detectable levels sooner than in wild-type and accumulates to same level as in wild-type. Double mutants with deletions of both NapA and NapB fail to grow on nitrate or reduce nitrate under anaerobic conditions. Double mutants for both NapB and NrfA reduces nitrate as fast as wild-type.</text>
</comment>
<comment type="similarity">
    <text evidence="3">Belongs to the NapB family.</text>
</comment>
<dbReference type="EMBL" id="AE014299">
    <property type="protein sequence ID" value="AAN53921.1"/>
    <property type="molecule type" value="Genomic_DNA"/>
</dbReference>
<dbReference type="RefSeq" id="NP_716476.1">
    <property type="nucleotide sequence ID" value="NC_004347.2"/>
</dbReference>
<dbReference type="RefSeq" id="WP_011071135.1">
    <property type="nucleotide sequence ID" value="NZ_CP053946.1"/>
</dbReference>
<dbReference type="STRING" id="211586.SO_0845"/>
<dbReference type="PaxDb" id="211586-SO_0845"/>
<dbReference type="KEGG" id="son:SO_0845"/>
<dbReference type="PATRIC" id="fig|211586.12.peg.809"/>
<dbReference type="eggNOG" id="COG3043">
    <property type="taxonomic scope" value="Bacteria"/>
</dbReference>
<dbReference type="HOGENOM" id="CLU_103367_1_0_6"/>
<dbReference type="OrthoDB" id="13290at2"/>
<dbReference type="PhylomeDB" id="Q8EIJ4"/>
<dbReference type="BioCyc" id="SONE211586:G1GMP-787-MONOMER"/>
<dbReference type="Proteomes" id="UP000008186">
    <property type="component" value="Chromosome"/>
</dbReference>
<dbReference type="GO" id="GO:0042597">
    <property type="term" value="C:periplasmic space"/>
    <property type="evidence" value="ECO:0007669"/>
    <property type="project" value="UniProtKB-SubCell"/>
</dbReference>
<dbReference type="GO" id="GO:0046872">
    <property type="term" value="F:metal ion binding"/>
    <property type="evidence" value="ECO:0007669"/>
    <property type="project" value="UniProtKB-KW"/>
</dbReference>
<dbReference type="GO" id="GO:0009061">
    <property type="term" value="P:anaerobic respiration"/>
    <property type="evidence" value="ECO:0000318"/>
    <property type="project" value="GO_Central"/>
</dbReference>
<dbReference type="Gene3D" id="1.10.1130.10">
    <property type="entry name" value="Flavocytochrome C3, Chain A"/>
    <property type="match status" value="1"/>
</dbReference>
<dbReference type="InterPro" id="IPR036280">
    <property type="entry name" value="Multihaem_cyt_sf"/>
</dbReference>
<dbReference type="InterPro" id="IPR005591">
    <property type="entry name" value="NapB"/>
</dbReference>
<dbReference type="PANTHER" id="PTHR38604">
    <property type="entry name" value="PERIPLASMIC NITRATE REDUCTASE, ELECTRON TRANSFER SUBUNIT"/>
    <property type="match status" value="1"/>
</dbReference>
<dbReference type="PANTHER" id="PTHR38604:SF1">
    <property type="entry name" value="PERIPLASMIC NITRATE REDUCTASE, ELECTRON TRANSFER SUBUNIT"/>
    <property type="match status" value="1"/>
</dbReference>
<dbReference type="Pfam" id="PF03892">
    <property type="entry name" value="NapB"/>
    <property type="match status" value="1"/>
</dbReference>
<dbReference type="PIRSF" id="PIRSF006105">
    <property type="entry name" value="NapB"/>
    <property type="match status" value="1"/>
</dbReference>
<dbReference type="SUPFAM" id="SSF48695">
    <property type="entry name" value="Multiheme cytochromes"/>
    <property type="match status" value="1"/>
</dbReference>
<dbReference type="PROSITE" id="PS51257">
    <property type="entry name" value="PROKAR_LIPOPROTEIN"/>
    <property type="match status" value="1"/>
</dbReference>
<proteinExistence type="evidence at transcript level"/>
<evidence type="ECO:0000250" key="1">
    <source>
        <dbReference type="UniProtKB" id="P39186"/>
    </source>
</evidence>
<evidence type="ECO:0000250" key="2">
    <source>
        <dbReference type="UniProtKB" id="P44654"/>
    </source>
</evidence>
<evidence type="ECO:0000255" key="3"/>
<evidence type="ECO:0000255" key="4">
    <source>
        <dbReference type="PROSITE-ProRule" id="PRU00303"/>
    </source>
</evidence>
<evidence type="ECO:0000269" key="5">
    <source>
    </source>
</evidence>
<evidence type="ECO:0000303" key="6">
    <source>
    </source>
</evidence>
<evidence type="ECO:0000305" key="7"/>
<evidence type="ECO:0000312" key="8">
    <source>
        <dbReference type="EMBL" id="AAN53921.1"/>
    </source>
</evidence>
<sequence length="143" mass="15432">MKKILTLAAIVLAIGGCSGQQAETQATPVNIKSLAGDSAVTDIRPADAMPVYPARGKALERSFTDQPPLIPHKDDYKITLDKNGCLTCHSWDKAARMKATPVAKSHVIDDKGTLNGHNYFCTQCHVAQAENKAPLVENKFSTQ</sequence>
<name>NAPB_SHEON</name>
<accession>Q8EIJ4</accession>
<organism>
    <name type="scientific">Shewanella oneidensis (strain ATCC 700550 / JCM 31522 / CIP 106686 / LMG 19005 / NCIMB 14063 / MR-1)</name>
    <dbReference type="NCBI Taxonomy" id="211586"/>
    <lineage>
        <taxon>Bacteria</taxon>
        <taxon>Pseudomonadati</taxon>
        <taxon>Pseudomonadota</taxon>
        <taxon>Gammaproteobacteria</taxon>
        <taxon>Alteromonadales</taxon>
        <taxon>Shewanellaceae</taxon>
        <taxon>Shewanella</taxon>
    </lineage>
</organism>
<feature type="signal peptide" evidence="4">
    <location>
        <begin position="1"/>
        <end position="22"/>
    </location>
</feature>
<feature type="chain" id="PRO_0000417028" description="Periplasmic nitrate reductase, electron transfer subunit">
    <location>
        <begin position="23"/>
        <end position="143"/>
    </location>
</feature>
<feature type="binding site" description="axial binding residue" evidence="2">
    <location>
        <position position="72"/>
    </location>
    <ligand>
        <name>heme c</name>
        <dbReference type="ChEBI" id="CHEBI:61717"/>
        <label>1</label>
    </ligand>
    <ligandPart>
        <name>Fe</name>
        <dbReference type="ChEBI" id="CHEBI:18248"/>
    </ligandPart>
</feature>
<feature type="binding site" description="covalent" evidence="2">
    <location>
        <position position="85"/>
    </location>
    <ligand>
        <name>heme c</name>
        <dbReference type="ChEBI" id="CHEBI:61717"/>
        <label>1</label>
    </ligand>
</feature>
<feature type="binding site" description="covalent" evidence="2">
    <location>
        <position position="88"/>
    </location>
    <ligand>
        <name>heme c</name>
        <dbReference type="ChEBI" id="CHEBI:61717"/>
        <label>1</label>
    </ligand>
</feature>
<feature type="binding site" description="axial binding residue" evidence="2">
    <location>
        <position position="89"/>
    </location>
    <ligand>
        <name>heme c</name>
        <dbReference type="ChEBI" id="CHEBI:61717"/>
        <label>1</label>
    </ligand>
    <ligandPart>
        <name>Fe</name>
        <dbReference type="ChEBI" id="CHEBI:18248"/>
    </ligandPart>
</feature>
<feature type="binding site" description="axial binding residue" evidence="2">
    <location>
        <position position="106"/>
    </location>
    <ligand>
        <name>heme c</name>
        <dbReference type="ChEBI" id="CHEBI:61717"/>
        <label>2</label>
    </ligand>
    <ligandPart>
        <name>Fe</name>
        <dbReference type="ChEBI" id="CHEBI:18248"/>
    </ligandPart>
</feature>
<feature type="binding site" description="covalent" evidence="2">
    <location>
        <position position="121"/>
    </location>
    <ligand>
        <name>heme c</name>
        <dbReference type="ChEBI" id="CHEBI:61717"/>
        <label>2</label>
    </ligand>
</feature>
<feature type="binding site" description="covalent" evidence="2">
    <location>
        <position position="124"/>
    </location>
    <ligand>
        <name>heme c</name>
        <dbReference type="ChEBI" id="CHEBI:61717"/>
        <label>2</label>
    </ligand>
</feature>
<feature type="binding site" description="axial binding residue" evidence="2">
    <location>
        <position position="125"/>
    </location>
    <ligand>
        <name>heme c</name>
        <dbReference type="ChEBI" id="CHEBI:61717"/>
        <label>2</label>
    </ligand>
    <ligandPart>
        <name>Fe</name>
        <dbReference type="ChEBI" id="CHEBI:18248"/>
    </ligandPart>
</feature>
<keyword id="KW-0249">Electron transport</keyword>
<keyword id="KW-0349">Heme</keyword>
<keyword id="KW-0408">Iron</keyword>
<keyword id="KW-0479">Metal-binding</keyword>
<keyword id="KW-0574">Periplasm</keyword>
<keyword id="KW-1185">Reference proteome</keyword>
<keyword id="KW-0732">Signal</keyword>
<keyword id="KW-0813">Transport</keyword>